<name>RS20_SHEPW</name>
<reference key="1">
    <citation type="journal article" date="2008" name="PLoS ONE">
        <title>Environmental adaptation: genomic analysis of the piezotolerant and psychrotolerant deep-sea iron reducing bacterium Shewanella piezotolerans WP3.</title>
        <authorList>
            <person name="Wang F."/>
            <person name="Wang J."/>
            <person name="Jian H."/>
            <person name="Zhang B."/>
            <person name="Li S."/>
            <person name="Wang F."/>
            <person name="Zeng X."/>
            <person name="Gao L."/>
            <person name="Bartlett D.H."/>
            <person name="Yu J."/>
            <person name="Hu S."/>
            <person name="Xiao X."/>
        </authorList>
    </citation>
    <scope>NUCLEOTIDE SEQUENCE [LARGE SCALE GENOMIC DNA]</scope>
    <source>
        <strain>WP3 / JCM 13877</strain>
    </source>
</reference>
<gene>
    <name evidence="1" type="primary">rpsT</name>
    <name type="ordered locus">swp_3733</name>
</gene>
<proteinExistence type="inferred from homology"/>
<sequence>MANSKSAKKRALQSEKRRQHNASRSSMLRTYVKKVIAAINAGDHESATAAFVTAQPIVDRMATKGLIHKNKAARYKSRLNAKIKALAA</sequence>
<dbReference type="EMBL" id="CP000472">
    <property type="protein sequence ID" value="ACJ30415.1"/>
    <property type="molecule type" value="Genomic_DNA"/>
</dbReference>
<dbReference type="RefSeq" id="WP_020913759.1">
    <property type="nucleotide sequence ID" value="NC_011566.1"/>
</dbReference>
<dbReference type="SMR" id="B8CSC5"/>
<dbReference type="STRING" id="225849.swp_3733"/>
<dbReference type="KEGG" id="swp:swp_3733"/>
<dbReference type="eggNOG" id="COG0268">
    <property type="taxonomic scope" value="Bacteria"/>
</dbReference>
<dbReference type="HOGENOM" id="CLU_160655_4_0_6"/>
<dbReference type="OrthoDB" id="9807974at2"/>
<dbReference type="Proteomes" id="UP000000753">
    <property type="component" value="Chromosome"/>
</dbReference>
<dbReference type="GO" id="GO:0005829">
    <property type="term" value="C:cytosol"/>
    <property type="evidence" value="ECO:0007669"/>
    <property type="project" value="TreeGrafter"/>
</dbReference>
<dbReference type="GO" id="GO:0015935">
    <property type="term" value="C:small ribosomal subunit"/>
    <property type="evidence" value="ECO:0007669"/>
    <property type="project" value="TreeGrafter"/>
</dbReference>
<dbReference type="GO" id="GO:0070181">
    <property type="term" value="F:small ribosomal subunit rRNA binding"/>
    <property type="evidence" value="ECO:0007669"/>
    <property type="project" value="TreeGrafter"/>
</dbReference>
<dbReference type="GO" id="GO:0003735">
    <property type="term" value="F:structural constituent of ribosome"/>
    <property type="evidence" value="ECO:0007669"/>
    <property type="project" value="InterPro"/>
</dbReference>
<dbReference type="GO" id="GO:0006412">
    <property type="term" value="P:translation"/>
    <property type="evidence" value="ECO:0007669"/>
    <property type="project" value="UniProtKB-UniRule"/>
</dbReference>
<dbReference type="FunFam" id="1.20.58.110:FF:000001">
    <property type="entry name" value="30S ribosomal protein S20"/>
    <property type="match status" value="1"/>
</dbReference>
<dbReference type="Gene3D" id="1.20.58.110">
    <property type="entry name" value="Ribosomal protein S20"/>
    <property type="match status" value="1"/>
</dbReference>
<dbReference type="HAMAP" id="MF_00500">
    <property type="entry name" value="Ribosomal_bS20"/>
    <property type="match status" value="1"/>
</dbReference>
<dbReference type="InterPro" id="IPR002583">
    <property type="entry name" value="Ribosomal_bS20"/>
</dbReference>
<dbReference type="InterPro" id="IPR036510">
    <property type="entry name" value="Ribosomal_bS20_sf"/>
</dbReference>
<dbReference type="NCBIfam" id="TIGR00029">
    <property type="entry name" value="S20"/>
    <property type="match status" value="1"/>
</dbReference>
<dbReference type="PANTHER" id="PTHR33398">
    <property type="entry name" value="30S RIBOSOMAL PROTEIN S20"/>
    <property type="match status" value="1"/>
</dbReference>
<dbReference type="PANTHER" id="PTHR33398:SF1">
    <property type="entry name" value="SMALL RIBOSOMAL SUBUNIT PROTEIN BS20C"/>
    <property type="match status" value="1"/>
</dbReference>
<dbReference type="Pfam" id="PF01649">
    <property type="entry name" value="Ribosomal_S20p"/>
    <property type="match status" value="1"/>
</dbReference>
<dbReference type="SUPFAM" id="SSF46992">
    <property type="entry name" value="Ribosomal protein S20"/>
    <property type="match status" value="1"/>
</dbReference>
<accession>B8CSC5</accession>
<comment type="function">
    <text evidence="1">Binds directly to 16S ribosomal RNA.</text>
</comment>
<comment type="similarity">
    <text evidence="1">Belongs to the bacterial ribosomal protein bS20 family.</text>
</comment>
<keyword id="KW-0687">Ribonucleoprotein</keyword>
<keyword id="KW-0689">Ribosomal protein</keyword>
<keyword id="KW-0694">RNA-binding</keyword>
<keyword id="KW-0699">rRNA-binding</keyword>
<feature type="chain" id="PRO_1000126512" description="Small ribosomal subunit protein bS20">
    <location>
        <begin position="1"/>
        <end position="88"/>
    </location>
</feature>
<feature type="region of interest" description="Disordered" evidence="2">
    <location>
        <begin position="1"/>
        <end position="27"/>
    </location>
</feature>
<feature type="compositionally biased region" description="Basic residues" evidence="2">
    <location>
        <begin position="1"/>
        <end position="21"/>
    </location>
</feature>
<protein>
    <recommendedName>
        <fullName evidence="1">Small ribosomal subunit protein bS20</fullName>
    </recommendedName>
    <alternativeName>
        <fullName evidence="3">30S ribosomal protein S20</fullName>
    </alternativeName>
</protein>
<evidence type="ECO:0000255" key="1">
    <source>
        <dbReference type="HAMAP-Rule" id="MF_00500"/>
    </source>
</evidence>
<evidence type="ECO:0000256" key="2">
    <source>
        <dbReference type="SAM" id="MobiDB-lite"/>
    </source>
</evidence>
<evidence type="ECO:0000305" key="3"/>
<organism>
    <name type="scientific">Shewanella piezotolerans (strain WP3 / JCM 13877)</name>
    <dbReference type="NCBI Taxonomy" id="225849"/>
    <lineage>
        <taxon>Bacteria</taxon>
        <taxon>Pseudomonadati</taxon>
        <taxon>Pseudomonadota</taxon>
        <taxon>Gammaproteobacteria</taxon>
        <taxon>Alteromonadales</taxon>
        <taxon>Shewanellaceae</taxon>
        <taxon>Shewanella</taxon>
    </lineage>
</organism>